<reference key="1">
    <citation type="journal article" date="2002" name="Proc. Natl. Acad. Sci. U.S.A.">
        <title>The genome sequence of Bifidobacterium longum reflects its adaptation to the human gastrointestinal tract.</title>
        <authorList>
            <person name="Schell M.A."/>
            <person name="Karmirantzou M."/>
            <person name="Snel B."/>
            <person name="Vilanova D."/>
            <person name="Berger B."/>
            <person name="Pessi G."/>
            <person name="Zwahlen M.-C."/>
            <person name="Desiere F."/>
            <person name="Bork P."/>
            <person name="Delley M."/>
            <person name="Pridmore R.D."/>
            <person name="Arigoni F."/>
        </authorList>
    </citation>
    <scope>NUCLEOTIDE SEQUENCE [LARGE SCALE GENOMIC DNA]</scope>
    <source>
        <strain>NCC 2705</strain>
    </source>
</reference>
<organism>
    <name type="scientific">Bifidobacterium longum (strain NCC 2705)</name>
    <dbReference type="NCBI Taxonomy" id="206672"/>
    <lineage>
        <taxon>Bacteria</taxon>
        <taxon>Bacillati</taxon>
        <taxon>Actinomycetota</taxon>
        <taxon>Actinomycetes</taxon>
        <taxon>Bifidobacteriales</taxon>
        <taxon>Bifidobacteriaceae</taxon>
        <taxon>Bifidobacterium</taxon>
    </lineage>
</organism>
<proteinExistence type="inferred from homology"/>
<dbReference type="EC" id="2.7.7.23" evidence="1"/>
<dbReference type="EC" id="2.3.1.157" evidence="1"/>
<dbReference type="EMBL" id="AE014295">
    <property type="protein sequence ID" value="AAN24775.1"/>
    <property type="molecule type" value="Genomic_DNA"/>
</dbReference>
<dbReference type="RefSeq" id="NP_696139.1">
    <property type="nucleotide sequence ID" value="NC_004307.2"/>
</dbReference>
<dbReference type="RefSeq" id="WP_008782812.1">
    <property type="nucleotide sequence ID" value="NC_004307.2"/>
</dbReference>
<dbReference type="SMR" id="Q8G5P1"/>
<dbReference type="STRING" id="206672.BL0964"/>
<dbReference type="EnsemblBacteria" id="AAN24775">
    <property type="protein sequence ID" value="AAN24775"/>
    <property type="gene ID" value="BL0964"/>
</dbReference>
<dbReference type="KEGG" id="blo:BL0964"/>
<dbReference type="PATRIC" id="fig|206672.9.peg.668"/>
<dbReference type="HOGENOM" id="CLU_029499_15_2_11"/>
<dbReference type="OrthoDB" id="9775031at2"/>
<dbReference type="PhylomeDB" id="Q8G5P1"/>
<dbReference type="UniPathway" id="UPA00113">
    <property type="reaction ID" value="UER00532"/>
</dbReference>
<dbReference type="UniPathway" id="UPA00113">
    <property type="reaction ID" value="UER00533"/>
</dbReference>
<dbReference type="UniPathway" id="UPA00973"/>
<dbReference type="Proteomes" id="UP000000439">
    <property type="component" value="Chromosome"/>
</dbReference>
<dbReference type="GO" id="GO:0005737">
    <property type="term" value="C:cytoplasm"/>
    <property type="evidence" value="ECO:0007669"/>
    <property type="project" value="UniProtKB-SubCell"/>
</dbReference>
<dbReference type="GO" id="GO:0016020">
    <property type="term" value="C:membrane"/>
    <property type="evidence" value="ECO:0007669"/>
    <property type="project" value="GOC"/>
</dbReference>
<dbReference type="GO" id="GO:0019134">
    <property type="term" value="F:glucosamine-1-phosphate N-acetyltransferase activity"/>
    <property type="evidence" value="ECO:0007669"/>
    <property type="project" value="UniProtKB-UniRule"/>
</dbReference>
<dbReference type="GO" id="GO:0000287">
    <property type="term" value="F:magnesium ion binding"/>
    <property type="evidence" value="ECO:0007669"/>
    <property type="project" value="UniProtKB-UniRule"/>
</dbReference>
<dbReference type="GO" id="GO:0003977">
    <property type="term" value="F:UDP-N-acetylglucosamine diphosphorylase activity"/>
    <property type="evidence" value="ECO:0007669"/>
    <property type="project" value="UniProtKB-UniRule"/>
</dbReference>
<dbReference type="GO" id="GO:0000902">
    <property type="term" value="P:cell morphogenesis"/>
    <property type="evidence" value="ECO:0007669"/>
    <property type="project" value="UniProtKB-UniRule"/>
</dbReference>
<dbReference type="GO" id="GO:0071555">
    <property type="term" value="P:cell wall organization"/>
    <property type="evidence" value="ECO:0007669"/>
    <property type="project" value="UniProtKB-KW"/>
</dbReference>
<dbReference type="GO" id="GO:0009245">
    <property type="term" value="P:lipid A biosynthetic process"/>
    <property type="evidence" value="ECO:0007669"/>
    <property type="project" value="UniProtKB-UniRule"/>
</dbReference>
<dbReference type="GO" id="GO:0009252">
    <property type="term" value="P:peptidoglycan biosynthetic process"/>
    <property type="evidence" value="ECO:0007669"/>
    <property type="project" value="UniProtKB-UniRule"/>
</dbReference>
<dbReference type="GO" id="GO:0008360">
    <property type="term" value="P:regulation of cell shape"/>
    <property type="evidence" value="ECO:0007669"/>
    <property type="project" value="UniProtKB-KW"/>
</dbReference>
<dbReference type="GO" id="GO:0006048">
    <property type="term" value="P:UDP-N-acetylglucosamine biosynthetic process"/>
    <property type="evidence" value="ECO:0007669"/>
    <property type="project" value="UniProtKB-UniPathway"/>
</dbReference>
<dbReference type="CDD" id="cd02540">
    <property type="entry name" value="GT2_GlmU_N_bac"/>
    <property type="match status" value="1"/>
</dbReference>
<dbReference type="CDD" id="cd03353">
    <property type="entry name" value="LbH_GlmU_C"/>
    <property type="match status" value="1"/>
</dbReference>
<dbReference type="Gene3D" id="2.160.10.10">
    <property type="entry name" value="Hexapeptide repeat proteins"/>
    <property type="match status" value="1"/>
</dbReference>
<dbReference type="Gene3D" id="3.90.550.10">
    <property type="entry name" value="Spore Coat Polysaccharide Biosynthesis Protein SpsA, Chain A"/>
    <property type="match status" value="1"/>
</dbReference>
<dbReference type="HAMAP" id="MF_01631">
    <property type="entry name" value="GlmU"/>
    <property type="match status" value="1"/>
</dbReference>
<dbReference type="InterPro" id="IPR005882">
    <property type="entry name" value="Bifunctional_GlmU"/>
</dbReference>
<dbReference type="InterPro" id="IPR050065">
    <property type="entry name" value="GlmU-like"/>
</dbReference>
<dbReference type="InterPro" id="IPR038009">
    <property type="entry name" value="GlmU_C_LbH"/>
</dbReference>
<dbReference type="InterPro" id="IPR001451">
    <property type="entry name" value="Hexapep"/>
</dbReference>
<dbReference type="InterPro" id="IPR025877">
    <property type="entry name" value="MobA-like_NTP_Trfase"/>
</dbReference>
<dbReference type="InterPro" id="IPR029044">
    <property type="entry name" value="Nucleotide-diphossugar_trans"/>
</dbReference>
<dbReference type="InterPro" id="IPR011004">
    <property type="entry name" value="Trimer_LpxA-like_sf"/>
</dbReference>
<dbReference type="NCBIfam" id="TIGR01173">
    <property type="entry name" value="glmU"/>
    <property type="match status" value="1"/>
</dbReference>
<dbReference type="NCBIfam" id="NF010932">
    <property type="entry name" value="PRK14352.1"/>
    <property type="match status" value="1"/>
</dbReference>
<dbReference type="PANTHER" id="PTHR43584:SF3">
    <property type="entry name" value="BIFUNCTIONAL PROTEIN GLMU"/>
    <property type="match status" value="1"/>
</dbReference>
<dbReference type="PANTHER" id="PTHR43584">
    <property type="entry name" value="NUCLEOTIDYL TRANSFERASE"/>
    <property type="match status" value="1"/>
</dbReference>
<dbReference type="Pfam" id="PF00132">
    <property type="entry name" value="Hexapep"/>
    <property type="match status" value="1"/>
</dbReference>
<dbReference type="Pfam" id="PF12804">
    <property type="entry name" value="NTP_transf_3"/>
    <property type="match status" value="1"/>
</dbReference>
<dbReference type="SUPFAM" id="SSF53448">
    <property type="entry name" value="Nucleotide-diphospho-sugar transferases"/>
    <property type="match status" value="1"/>
</dbReference>
<dbReference type="SUPFAM" id="SSF51161">
    <property type="entry name" value="Trimeric LpxA-like enzymes"/>
    <property type="match status" value="1"/>
</dbReference>
<comment type="function">
    <text evidence="1">Catalyzes the last two sequential reactions in the de novo biosynthetic pathway for UDP-N-acetylglucosamine (UDP-GlcNAc). The C-terminal domain catalyzes the transfer of acetyl group from acetyl coenzyme A to glucosamine-1-phosphate (GlcN-1-P) to produce N-acetylglucosamine-1-phosphate (GlcNAc-1-P), which is converted into UDP-GlcNAc by the transfer of uridine 5-monophosphate (from uridine 5-triphosphate), a reaction catalyzed by the N-terminal domain.</text>
</comment>
<comment type="catalytic activity">
    <reaction evidence="1">
        <text>alpha-D-glucosamine 1-phosphate + acetyl-CoA = N-acetyl-alpha-D-glucosamine 1-phosphate + CoA + H(+)</text>
        <dbReference type="Rhea" id="RHEA:13725"/>
        <dbReference type="ChEBI" id="CHEBI:15378"/>
        <dbReference type="ChEBI" id="CHEBI:57287"/>
        <dbReference type="ChEBI" id="CHEBI:57288"/>
        <dbReference type="ChEBI" id="CHEBI:57776"/>
        <dbReference type="ChEBI" id="CHEBI:58516"/>
        <dbReference type="EC" id="2.3.1.157"/>
    </reaction>
</comment>
<comment type="catalytic activity">
    <reaction evidence="1">
        <text>N-acetyl-alpha-D-glucosamine 1-phosphate + UTP + H(+) = UDP-N-acetyl-alpha-D-glucosamine + diphosphate</text>
        <dbReference type="Rhea" id="RHEA:13509"/>
        <dbReference type="ChEBI" id="CHEBI:15378"/>
        <dbReference type="ChEBI" id="CHEBI:33019"/>
        <dbReference type="ChEBI" id="CHEBI:46398"/>
        <dbReference type="ChEBI" id="CHEBI:57705"/>
        <dbReference type="ChEBI" id="CHEBI:57776"/>
        <dbReference type="EC" id="2.7.7.23"/>
    </reaction>
</comment>
<comment type="cofactor">
    <cofactor evidence="1">
        <name>Mg(2+)</name>
        <dbReference type="ChEBI" id="CHEBI:18420"/>
    </cofactor>
    <text evidence="1">Binds 1 Mg(2+) ion per subunit.</text>
</comment>
<comment type="pathway">
    <text evidence="1">Nucleotide-sugar biosynthesis; UDP-N-acetyl-alpha-D-glucosamine biosynthesis; N-acetyl-alpha-D-glucosamine 1-phosphate from alpha-D-glucosamine 6-phosphate (route II): step 2/2.</text>
</comment>
<comment type="pathway">
    <text evidence="1">Nucleotide-sugar biosynthesis; UDP-N-acetyl-alpha-D-glucosamine biosynthesis; UDP-N-acetyl-alpha-D-glucosamine from N-acetyl-alpha-D-glucosamine 1-phosphate: step 1/1.</text>
</comment>
<comment type="pathway">
    <text evidence="1">Bacterial outer membrane biogenesis; LPS lipid A biosynthesis.</text>
</comment>
<comment type="subunit">
    <text evidence="1">Homotrimer.</text>
</comment>
<comment type="subcellular location">
    <subcellularLocation>
        <location evidence="1">Cytoplasm</location>
    </subcellularLocation>
</comment>
<comment type="similarity">
    <text evidence="1">In the N-terminal section; belongs to the N-acetylglucosamine-1-phosphate uridyltransferase family.</text>
</comment>
<comment type="similarity">
    <text evidence="1">In the C-terminal section; belongs to the transferase hexapeptide repeat family.</text>
</comment>
<feature type="chain" id="PRO_0000233737" description="Bifunctional protein GlmU">
    <location>
        <begin position="1"/>
        <end position="460"/>
    </location>
</feature>
<feature type="region of interest" description="Pyrophosphorylase" evidence="1">
    <location>
        <begin position="1"/>
        <end position="235"/>
    </location>
</feature>
<feature type="region of interest" description="Linker" evidence="1">
    <location>
        <begin position="236"/>
        <end position="256"/>
    </location>
</feature>
<feature type="region of interest" description="N-acetyltransferase" evidence="1">
    <location>
        <begin position="257"/>
        <end position="460"/>
    </location>
</feature>
<feature type="active site" description="Proton acceptor" evidence="1">
    <location>
        <position position="368"/>
    </location>
</feature>
<feature type="binding site" evidence="1">
    <location>
        <begin position="9"/>
        <end position="12"/>
    </location>
    <ligand>
        <name>UDP-N-acetyl-alpha-D-glucosamine</name>
        <dbReference type="ChEBI" id="CHEBI:57705"/>
    </ligand>
</feature>
<feature type="binding site" evidence="1">
    <location>
        <position position="23"/>
    </location>
    <ligand>
        <name>UDP-N-acetyl-alpha-D-glucosamine</name>
        <dbReference type="ChEBI" id="CHEBI:57705"/>
    </ligand>
</feature>
<feature type="binding site" evidence="1">
    <location>
        <position position="76"/>
    </location>
    <ligand>
        <name>UDP-N-acetyl-alpha-D-glucosamine</name>
        <dbReference type="ChEBI" id="CHEBI:57705"/>
    </ligand>
</feature>
<feature type="binding site" evidence="1">
    <location>
        <begin position="81"/>
        <end position="82"/>
    </location>
    <ligand>
        <name>UDP-N-acetyl-alpha-D-glucosamine</name>
        <dbReference type="ChEBI" id="CHEBI:57705"/>
    </ligand>
</feature>
<feature type="binding site" evidence="1">
    <location>
        <position position="109"/>
    </location>
    <ligand>
        <name>Mg(2+)</name>
        <dbReference type="ChEBI" id="CHEBI:18420"/>
    </ligand>
</feature>
<feature type="binding site" evidence="1">
    <location>
        <position position="146"/>
    </location>
    <ligand>
        <name>UDP-N-acetyl-alpha-D-glucosamine</name>
        <dbReference type="ChEBI" id="CHEBI:57705"/>
    </ligand>
</feature>
<feature type="binding site" evidence="1">
    <location>
        <position position="161"/>
    </location>
    <ligand>
        <name>UDP-N-acetyl-alpha-D-glucosamine</name>
        <dbReference type="ChEBI" id="CHEBI:57705"/>
    </ligand>
</feature>
<feature type="binding site" evidence="1">
    <location>
        <position position="176"/>
    </location>
    <ligand>
        <name>UDP-N-acetyl-alpha-D-glucosamine</name>
        <dbReference type="ChEBI" id="CHEBI:57705"/>
    </ligand>
</feature>
<feature type="binding site" evidence="1">
    <location>
        <position position="233"/>
    </location>
    <ligand>
        <name>Mg(2+)</name>
        <dbReference type="ChEBI" id="CHEBI:18420"/>
    </ligand>
</feature>
<feature type="binding site" evidence="1">
    <location>
        <position position="233"/>
    </location>
    <ligand>
        <name>UDP-N-acetyl-alpha-D-glucosamine</name>
        <dbReference type="ChEBI" id="CHEBI:57705"/>
    </ligand>
</feature>
<feature type="binding site" evidence="1">
    <location>
        <position position="338"/>
    </location>
    <ligand>
        <name>UDP-N-acetyl-alpha-D-glucosamine</name>
        <dbReference type="ChEBI" id="CHEBI:57705"/>
    </ligand>
</feature>
<feature type="binding site" evidence="1">
    <location>
        <position position="356"/>
    </location>
    <ligand>
        <name>UDP-N-acetyl-alpha-D-glucosamine</name>
        <dbReference type="ChEBI" id="CHEBI:57705"/>
    </ligand>
</feature>
<feature type="binding site" evidence="1">
    <location>
        <position position="371"/>
    </location>
    <ligand>
        <name>UDP-N-acetyl-alpha-D-glucosamine</name>
        <dbReference type="ChEBI" id="CHEBI:57705"/>
    </ligand>
</feature>
<feature type="binding site" evidence="1">
    <location>
        <position position="382"/>
    </location>
    <ligand>
        <name>UDP-N-acetyl-alpha-D-glucosamine</name>
        <dbReference type="ChEBI" id="CHEBI:57705"/>
    </ligand>
</feature>
<feature type="binding site" evidence="1">
    <location>
        <begin position="391"/>
        <end position="392"/>
    </location>
    <ligand>
        <name>acetyl-CoA</name>
        <dbReference type="ChEBI" id="CHEBI:57288"/>
    </ligand>
</feature>
<feature type="binding site" evidence="1">
    <location>
        <position position="428"/>
    </location>
    <ligand>
        <name>acetyl-CoA</name>
        <dbReference type="ChEBI" id="CHEBI:57288"/>
    </ligand>
</feature>
<protein>
    <recommendedName>
        <fullName evidence="1">Bifunctional protein GlmU</fullName>
    </recommendedName>
    <domain>
        <recommendedName>
            <fullName evidence="1">UDP-N-acetylglucosamine pyrophosphorylase</fullName>
            <ecNumber evidence="1">2.7.7.23</ecNumber>
        </recommendedName>
        <alternativeName>
            <fullName evidence="1">N-acetylglucosamine-1-phosphate uridyltransferase</fullName>
        </alternativeName>
    </domain>
    <domain>
        <recommendedName>
            <fullName evidence="1">Glucosamine-1-phosphate N-acetyltransferase</fullName>
            <ecNumber evidence="1">2.3.1.157</ecNumber>
        </recommendedName>
    </domain>
</protein>
<sequence length="460" mass="49094">MALSAAIVLAAGEGTRMRSNKPKVLHAFAGKTFLNRVMDSVAALNPDTLAVVVHFQAERVAEAARSYDEQVTIVNQDDIPGTGRAVQCAMAQLTEAGKVDGPVLIAASDMPLLDSETLHRLVEFHTASGNGATVLTTILDDPTGYGRIIRDREGNVLRIVEQKDANRSELAVQEVNTSVYVFEASVLTEAIAGLKSNNAQGEFYLTDALETAKAAGKVGAFAAPDPLTVEGVNDRVQLAALSKTYNRRVCERWMRDGVTILDPETTWIEDDVQIGRDATILPGSFLQGHTVVGEDAIVGPYTTLIDATVDEGAVVERSRVQESHIGARTNIGPWTYLRPGNEFGEDAKAGAFVEMKKAHIGNGTKVPHLSYVGDAQLGDHTNIGGGTITANYDGVHKNRTTIGSGCHVGAGNLFVAPVEVGDNVTTGAGSVVRHAVPSDTMVYSENTQHNVEGWKPAWER</sequence>
<accession>Q8G5P1</accession>
<name>GLMU_BIFLO</name>
<gene>
    <name evidence="1" type="primary">glmU</name>
    <name type="ordered locus">BL0964</name>
</gene>
<keyword id="KW-0012">Acyltransferase</keyword>
<keyword id="KW-0133">Cell shape</keyword>
<keyword id="KW-0961">Cell wall biogenesis/degradation</keyword>
<keyword id="KW-0963">Cytoplasm</keyword>
<keyword id="KW-0460">Magnesium</keyword>
<keyword id="KW-0479">Metal-binding</keyword>
<keyword id="KW-0511">Multifunctional enzyme</keyword>
<keyword id="KW-0548">Nucleotidyltransferase</keyword>
<keyword id="KW-0573">Peptidoglycan synthesis</keyword>
<keyword id="KW-1185">Reference proteome</keyword>
<keyword id="KW-0677">Repeat</keyword>
<keyword id="KW-0808">Transferase</keyword>
<evidence type="ECO:0000255" key="1">
    <source>
        <dbReference type="HAMAP-Rule" id="MF_01631"/>
    </source>
</evidence>